<proteinExistence type="inferred from homology"/>
<organism>
    <name type="scientific">Mycoplasma capricolum subsp. capricolum (strain California kid / ATCC 27343 / NCTC 10154)</name>
    <dbReference type="NCBI Taxonomy" id="340047"/>
    <lineage>
        <taxon>Bacteria</taxon>
        <taxon>Bacillati</taxon>
        <taxon>Mycoplasmatota</taxon>
        <taxon>Mollicutes</taxon>
        <taxon>Mycoplasmataceae</taxon>
        <taxon>Mycoplasma</taxon>
    </lineage>
</organism>
<reference key="1">
    <citation type="submission" date="2005-09" db="EMBL/GenBank/DDBJ databases">
        <authorList>
            <person name="Glass J.I."/>
            <person name="Lartigue C."/>
            <person name="Pfannkoch C."/>
            <person name="Baden-Tillson H."/>
            <person name="Smith H.O."/>
            <person name="Venter J.C."/>
            <person name="Roske K."/>
            <person name="Wise K.S."/>
            <person name="Calcutt M.J."/>
            <person name="Nelson W.C."/>
            <person name="Nierman W.C."/>
        </authorList>
    </citation>
    <scope>NUCLEOTIDE SEQUENCE [LARGE SCALE GENOMIC DNA]</scope>
    <source>
        <strain>California kid / ATCC 27343 / NCTC 10154</strain>
    </source>
</reference>
<name>TMFO2_MYCCT</name>
<sequence>MKTIRIIGAGLSGCEAAYYLLKKGYFVELYEIKTIKKNPIQHYDYFCELAYSDSFRSTDLNTSVGTLKKELELLDSLIIKAARYASINQNNELVVNRIEFSKYITNYLKTFNNLKIIEQEYLNIDLNIPTIIAIGPISTPNFLTNLKKLINKENLKLFDTVEPTILKQSINMDICYSLDNNLNYLYCDLNKEQFEKFYNALISAKTFNSPLKNEIELLEKNNYFSIESLAKNKQEFINHFKPINNNAYITITLKKDSVINNLYTIVNFQTNLMWNEQLKVFSLIPGLENLKIMKYGVMHKNNYINTKKLLNLGVQLKTNKNIFFAGQIIGVDGYVESVCSGLISAINLDRYLNNKKMIIPNKNSTIGSLYNYLLKTDSNFSPMRINWALVDMIGGFELSDNSKKIYSKRAIKLIKQYLKKINT</sequence>
<evidence type="ECO:0000255" key="1">
    <source>
        <dbReference type="HAMAP-Rule" id="MF_01037"/>
    </source>
</evidence>
<protein>
    <recommendedName>
        <fullName evidence="1">Methylenetetrahydrofolate--tRNA-(uracil-5-)-methyltransferase TrmFO 2</fullName>
        <ecNumber evidence="1">2.1.1.74</ecNumber>
    </recommendedName>
    <alternativeName>
        <fullName evidence="1">Folate-dependent tRNA (uracil-5-)-methyltransferase 2</fullName>
    </alternativeName>
    <alternativeName>
        <fullName evidence="1">Folate-dependent tRNA(M-5-U54)-methyltransferase 2</fullName>
    </alternativeName>
</protein>
<comment type="function">
    <text evidence="1">Catalyzes the folate-dependent formation of 5-methyl-uridine at position 54 (M-5-U54) in all tRNAs.</text>
</comment>
<comment type="catalytic activity">
    <reaction evidence="1">
        <text>uridine(54) in tRNA + (6R)-5,10-methylene-5,6,7,8-tetrahydrofolate + NADH + H(+) = 5-methyluridine(54) in tRNA + (6S)-5,6,7,8-tetrahydrofolate + NAD(+)</text>
        <dbReference type="Rhea" id="RHEA:16873"/>
        <dbReference type="Rhea" id="RHEA-COMP:10167"/>
        <dbReference type="Rhea" id="RHEA-COMP:10193"/>
        <dbReference type="ChEBI" id="CHEBI:15378"/>
        <dbReference type="ChEBI" id="CHEBI:15636"/>
        <dbReference type="ChEBI" id="CHEBI:57453"/>
        <dbReference type="ChEBI" id="CHEBI:57540"/>
        <dbReference type="ChEBI" id="CHEBI:57945"/>
        <dbReference type="ChEBI" id="CHEBI:65315"/>
        <dbReference type="ChEBI" id="CHEBI:74447"/>
        <dbReference type="EC" id="2.1.1.74"/>
    </reaction>
</comment>
<comment type="catalytic activity">
    <reaction evidence="1">
        <text>uridine(54) in tRNA + (6R)-5,10-methylene-5,6,7,8-tetrahydrofolate + NADPH + H(+) = 5-methyluridine(54) in tRNA + (6S)-5,6,7,8-tetrahydrofolate + NADP(+)</text>
        <dbReference type="Rhea" id="RHEA:62372"/>
        <dbReference type="Rhea" id="RHEA-COMP:10167"/>
        <dbReference type="Rhea" id="RHEA-COMP:10193"/>
        <dbReference type="ChEBI" id="CHEBI:15378"/>
        <dbReference type="ChEBI" id="CHEBI:15636"/>
        <dbReference type="ChEBI" id="CHEBI:57453"/>
        <dbReference type="ChEBI" id="CHEBI:57783"/>
        <dbReference type="ChEBI" id="CHEBI:58349"/>
        <dbReference type="ChEBI" id="CHEBI:65315"/>
        <dbReference type="ChEBI" id="CHEBI:74447"/>
        <dbReference type="EC" id="2.1.1.74"/>
    </reaction>
</comment>
<comment type="cofactor">
    <cofactor evidence="1">
        <name>FAD</name>
        <dbReference type="ChEBI" id="CHEBI:57692"/>
    </cofactor>
</comment>
<comment type="subcellular location">
    <subcellularLocation>
        <location evidence="1">Cytoplasm</location>
    </subcellularLocation>
</comment>
<comment type="similarity">
    <text evidence="1">Belongs to the MnmG family. TrmFO subfamily.</text>
</comment>
<dbReference type="EC" id="2.1.1.74" evidence="1"/>
<dbReference type="EMBL" id="CP000123">
    <property type="protein sequence ID" value="ABC01649.1"/>
    <property type="molecule type" value="Genomic_DNA"/>
</dbReference>
<dbReference type="RefSeq" id="WP_011387477.1">
    <property type="nucleotide sequence ID" value="NC_007633.1"/>
</dbReference>
<dbReference type="SMR" id="Q2SRN2"/>
<dbReference type="GeneID" id="23778432"/>
<dbReference type="KEGG" id="mcp:MCAP_0613"/>
<dbReference type="HOGENOM" id="CLU_033057_1_0_14"/>
<dbReference type="PhylomeDB" id="Q2SRN2"/>
<dbReference type="Proteomes" id="UP000001928">
    <property type="component" value="Chromosome"/>
</dbReference>
<dbReference type="GO" id="GO:0005829">
    <property type="term" value="C:cytosol"/>
    <property type="evidence" value="ECO:0007669"/>
    <property type="project" value="TreeGrafter"/>
</dbReference>
<dbReference type="GO" id="GO:0050660">
    <property type="term" value="F:flavin adenine dinucleotide binding"/>
    <property type="evidence" value="ECO:0007669"/>
    <property type="project" value="UniProtKB-UniRule"/>
</dbReference>
<dbReference type="GO" id="GO:0047151">
    <property type="term" value="F:tRNA (uracil(54)-C5)-methyltransferase activity, 5,10-methylenetetrahydrofolate-dependent"/>
    <property type="evidence" value="ECO:0007669"/>
    <property type="project" value="UniProtKB-UniRule"/>
</dbReference>
<dbReference type="GO" id="GO:0030488">
    <property type="term" value="P:tRNA methylation"/>
    <property type="evidence" value="ECO:0007669"/>
    <property type="project" value="TreeGrafter"/>
</dbReference>
<dbReference type="GO" id="GO:0002098">
    <property type="term" value="P:tRNA wobble uridine modification"/>
    <property type="evidence" value="ECO:0007669"/>
    <property type="project" value="TreeGrafter"/>
</dbReference>
<dbReference type="Gene3D" id="3.50.50.60">
    <property type="entry name" value="FAD/NAD(P)-binding domain"/>
    <property type="match status" value="2"/>
</dbReference>
<dbReference type="HAMAP" id="MF_01037">
    <property type="entry name" value="TrmFO"/>
    <property type="match status" value="1"/>
</dbReference>
<dbReference type="InterPro" id="IPR036188">
    <property type="entry name" value="FAD/NAD-bd_sf"/>
</dbReference>
<dbReference type="InterPro" id="IPR002218">
    <property type="entry name" value="MnmG-rel"/>
</dbReference>
<dbReference type="InterPro" id="IPR040131">
    <property type="entry name" value="MnmG_N"/>
</dbReference>
<dbReference type="InterPro" id="IPR004417">
    <property type="entry name" value="TrmFO"/>
</dbReference>
<dbReference type="NCBIfam" id="NF003739">
    <property type="entry name" value="PRK05335.1"/>
    <property type="match status" value="1"/>
</dbReference>
<dbReference type="PANTHER" id="PTHR11806">
    <property type="entry name" value="GLUCOSE INHIBITED DIVISION PROTEIN A"/>
    <property type="match status" value="1"/>
</dbReference>
<dbReference type="PANTHER" id="PTHR11806:SF2">
    <property type="entry name" value="METHYLENETETRAHYDROFOLATE--TRNA-(URACIL-5-)-METHYLTRANSFERASE TRMFO"/>
    <property type="match status" value="1"/>
</dbReference>
<dbReference type="Pfam" id="PF01134">
    <property type="entry name" value="GIDA"/>
    <property type="match status" value="1"/>
</dbReference>
<dbReference type="SUPFAM" id="SSF51905">
    <property type="entry name" value="FAD/NAD(P)-binding domain"/>
    <property type="match status" value="1"/>
</dbReference>
<keyword id="KW-0963">Cytoplasm</keyword>
<keyword id="KW-0274">FAD</keyword>
<keyword id="KW-0285">Flavoprotein</keyword>
<keyword id="KW-0489">Methyltransferase</keyword>
<keyword id="KW-0520">NAD</keyword>
<keyword id="KW-0521">NADP</keyword>
<keyword id="KW-0808">Transferase</keyword>
<keyword id="KW-0819">tRNA processing</keyword>
<accession>Q2SRN2</accession>
<feature type="chain" id="PRO_0000346363" description="Methylenetetrahydrofolate--tRNA-(uracil-5-)-methyltransferase TrmFO 2">
    <location>
        <begin position="1"/>
        <end position="423"/>
    </location>
</feature>
<feature type="binding site" evidence="1">
    <location>
        <begin position="8"/>
        <end position="13"/>
    </location>
    <ligand>
        <name>FAD</name>
        <dbReference type="ChEBI" id="CHEBI:57692"/>
    </ligand>
</feature>
<gene>
    <name evidence="1" type="primary">trmFO2</name>
    <name type="ordered locus">MCAP_0613</name>
</gene>